<dbReference type="EMBL" id="AL590842">
    <property type="protein sequence ID" value="CAL19979.1"/>
    <property type="molecule type" value="Genomic_DNA"/>
</dbReference>
<dbReference type="EMBL" id="AE009952">
    <property type="protein sequence ID" value="AAM86408.1"/>
    <property type="molecule type" value="Genomic_DNA"/>
</dbReference>
<dbReference type="EMBL" id="AE017042">
    <property type="protein sequence ID" value="AAS61509.1"/>
    <property type="molecule type" value="Genomic_DNA"/>
</dbReference>
<dbReference type="PIR" id="AI0161">
    <property type="entry name" value="AI0161"/>
</dbReference>
<dbReference type="RefSeq" id="WP_002208766.1">
    <property type="nucleotide sequence ID" value="NZ_WUCM01000027.1"/>
</dbReference>
<dbReference type="RefSeq" id="YP_002346351.1">
    <property type="nucleotide sequence ID" value="NC_003143.1"/>
</dbReference>
<dbReference type="SMR" id="Q8ZGH1"/>
<dbReference type="IntAct" id="Q8ZGH1">
    <property type="interactions" value="2"/>
</dbReference>
<dbReference type="STRING" id="214092.YPO1326"/>
<dbReference type="PaxDb" id="214092-YPO1326"/>
<dbReference type="DNASU" id="1147804"/>
<dbReference type="EnsemblBacteria" id="AAS61509">
    <property type="protein sequence ID" value="AAS61509"/>
    <property type="gene ID" value="YP_1266"/>
</dbReference>
<dbReference type="KEGG" id="ype:YPO1326"/>
<dbReference type="KEGG" id="ypk:y2857"/>
<dbReference type="KEGG" id="ypm:YP_1266"/>
<dbReference type="PATRIC" id="fig|214092.21.peg.1641"/>
<dbReference type="eggNOG" id="COG0569">
    <property type="taxonomic scope" value="Bacteria"/>
</dbReference>
<dbReference type="eggNOG" id="COG2985">
    <property type="taxonomic scope" value="Bacteria"/>
</dbReference>
<dbReference type="HOGENOM" id="CLU_035023_2_2_6"/>
<dbReference type="OMA" id="IHSQMAD"/>
<dbReference type="OrthoDB" id="5166626at2"/>
<dbReference type="Proteomes" id="UP000000815">
    <property type="component" value="Chromosome"/>
</dbReference>
<dbReference type="Proteomes" id="UP000001019">
    <property type="component" value="Chromosome"/>
</dbReference>
<dbReference type="Proteomes" id="UP000002490">
    <property type="component" value="Chromosome"/>
</dbReference>
<dbReference type="GO" id="GO:0005886">
    <property type="term" value="C:plasma membrane"/>
    <property type="evidence" value="ECO:0000318"/>
    <property type="project" value="GO_Central"/>
</dbReference>
<dbReference type="GO" id="GO:0008324">
    <property type="term" value="F:monoatomic cation transmembrane transporter activity"/>
    <property type="evidence" value="ECO:0007669"/>
    <property type="project" value="InterPro"/>
</dbReference>
<dbReference type="GO" id="GO:0006813">
    <property type="term" value="P:potassium ion transport"/>
    <property type="evidence" value="ECO:0007669"/>
    <property type="project" value="InterPro"/>
</dbReference>
<dbReference type="FunFam" id="3.30.70.1450:FF:000003">
    <property type="entry name" value="Putative transport protein YbjL"/>
    <property type="match status" value="1"/>
</dbReference>
<dbReference type="Gene3D" id="3.30.70.1450">
    <property type="entry name" value="Regulator of K+ conductance, C-terminal domain"/>
    <property type="match status" value="2"/>
</dbReference>
<dbReference type="HAMAP" id="MF_01015">
    <property type="entry name" value="YbjL"/>
    <property type="match status" value="1"/>
</dbReference>
<dbReference type="InterPro" id="IPR050144">
    <property type="entry name" value="AAE_transporter"/>
</dbReference>
<dbReference type="InterPro" id="IPR006037">
    <property type="entry name" value="RCK_C"/>
</dbReference>
<dbReference type="InterPro" id="IPR036721">
    <property type="entry name" value="RCK_C_sf"/>
</dbReference>
<dbReference type="InterPro" id="IPR023017">
    <property type="entry name" value="Transp_YbjL_put"/>
</dbReference>
<dbReference type="InterPro" id="IPR006512">
    <property type="entry name" value="YidE_YbjL"/>
</dbReference>
<dbReference type="NCBIfam" id="NF003440">
    <property type="entry name" value="PRK04972.1"/>
    <property type="match status" value="1"/>
</dbReference>
<dbReference type="NCBIfam" id="TIGR01625">
    <property type="entry name" value="YidE_YbjL_dupl"/>
    <property type="match status" value="2"/>
</dbReference>
<dbReference type="PANTHER" id="PTHR30445">
    <property type="entry name" value="K(+)_H(+) ANTIPORTER SUBUNIT KHTT"/>
    <property type="match status" value="1"/>
</dbReference>
<dbReference type="PANTHER" id="PTHR30445:SF10">
    <property type="entry name" value="TRANSPORT PROTEIN YBJL-RELATED"/>
    <property type="match status" value="1"/>
</dbReference>
<dbReference type="Pfam" id="PF06826">
    <property type="entry name" value="Asp-Al_Ex"/>
    <property type="match status" value="2"/>
</dbReference>
<dbReference type="Pfam" id="PF02080">
    <property type="entry name" value="TrkA_C"/>
    <property type="match status" value="2"/>
</dbReference>
<dbReference type="SUPFAM" id="SSF116726">
    <property type="entry name" value="TrkA C-terminal domain-like"/>
    <property type="match status" value="2"/>
</dbReference>
<dbReference type="PROSITE" id="PS51202">
    <property type="entry name" value="RCK_C"/>
    <property type="match status" value="2"/>
</dbReference>
<proteinExistence type="inferred from homology"/>
<sequence>MNINVANLLNGNYILLLFVVLALGLCLGKLRLGSIQLGNAIGVLVVSLLLGQQHFAINTEALNLGFMLFIFCVGVEAGPNFFSIFFRDGKNYLMLALVMVGSAMILALGLGKLFGWDIGLTAGMLAGSMTSTPVLVGAGDTLRHTMANGSSLQQAQDNLSLGYALTYLIGLVSLILGARYLPKLQHQDLPTSAQQIARERGLDTDSQRKVYLPVIRAYRVGPELVAWADGKNLRELGIYRQTGCYIERIRRNGILANPDGDAVLQVGDEISLVGYPDAHSRLDPSFRNGKEVFDRDLLDMRIVTEEIVVKNSNAVGKRLSHLKLTDHGCFLNRVIRSQIEMPIDDNVVLNKGDVLQVSGDARRVKSVAEKIGFISIHSQVTDLLAFCSFFILGLMIGLITFQFSNFSFGIGNAAGLLLAGIMLGFLRANHPTFGYIPQGALNMVKEFGLMVFMAGVGLSAGGGINSSLGAVGGQMLISGLIVSLVPVVICFVFGAYVLRMNRALLFGAIMGARTCAPAMDIISDTARSNIPALGYAGTYAIANVLLTLAGSLIVILWPGILG</sequence>
<comment type="subcellular location">
    <subcellularLocation>
        <location evidence="1">Cell membrane</location>
        <topology evidence="1">Multi-pass membrane protein</topology>
    </subcellularLocation>
</comment>
<comment type="similarity">
    <text evidence="1">Belongs to the AAE transporter (TC 2.A.81) family. YbjL subfamily.</text>
</comment>
<feature type="chain" id="PRO_0000208795" description="Putative transport protein YPO1326/y2857/YP_1266">
    <location>
        <begin position="1"/>
        <end position="562"/>
    </location>
</feature>
<feature type="transmembrane region" description="Helical" evidence="1">
    <location>
        <begin position="8"/>
        <end position="28"/>
    </location>
</feature>
<feature type="transmembrane region" description="Helical" evidence="1">
    <location>
        <begin position="37"/>
        <end position="57"/>
    </location>
</feature>
<feature type="transmembrane region" description="Helical" evidence="1">
    <location>
        <begin position="66"/>
        <end position="86"/>
    </location>
</feature>
<feature type="transmembrane region" description="Helical" evidence="1">
    <location>
        <begin position="94"/>
        <end position="114"/>
    </location>
</feature>
<feature type="transmembrane region" description="Helical" evidence="1">
    <location>
        <begin position="118"/>
        <end position="138"/>
    </location>
</feature>
<feature type="transmembrane region" description="Helical" evidence="1">
    <location>
        <begin position="158"/>
        <end position="178"/>
    </location>
</feature>
<feature type="transmembrane region" description="Helical" evidence="1">
    <location>
        <begin position="383"/>
        <end position="403"/>
    </location>
</feature>
<feature type="transmembrane region" description="Helical" evidence="1">
    <location>
        <begin position="406"/>
        <end position="426"/>
    </location>
</feature>
<feature type="transmembrane region" description="Helical" evidence="1">
    <location>
        <begin position="447"/>
        <end position="467"/>
    </location>
</feature>
<feature type="transmembrane region" description="Helical" evidence="1">
    <location>
        <begin position="475"/>
        <end position="495"/>
    </location>
</feature>
<feature type="transmembrane region" description="Helical" evidence="1">
    <location>
        <begin position="541"/>
        <end position="561"/>
    </location>
</feature>
<feature type="domain" description="RCK C-terminal 1" evidence="1">
    <location>
        <begin position="202"/>
        <end position="288"/>
    </location>
</feature>
<feature type="domain" description="RCK C-terminal 2" evidence="1">
    <location>
        <begin position="290"/>
        <end position="373"/>
    </location>
</feature>
<accession>Q8ZGH1</accession>
<accession>Q0WH87</accession>
<organism>
    <name type="scientific">Yersinia pestis</name>
    <dbReference type="NCBI Taxonomy" id="632"/>
    <lineage>
        <taxon>Bacteria</taxon>
        <taxon>Pseudomonadati</taxon>
        <taxon>Pseudomonadota</taxon>
        <taxon>Gammaproteobacteria</taxon>
        <taxon>Enterobacterales</taxon>
        <taxon>Yersiniaceae</taxon>
        <taxon>Yersinia</taxon>
    </lineage>
</organism>
<evidence type="ECO:0000255" key="1">
    <source>
        <dbReference type="HAMAP-Rule" id="MF_01015"/>
    </source>
</evidence>
<keyword id="KW-1003">Cell membrane</keyword>
<keyword id="KW-0472">Membrane</keyword>
<keyword id="KW-1185">Reference proteome</keyword>
<keyword id="KW-0677">Repeat</keyword>
<keyword id="KW-0812">Transmembrane</keyword>
<keyword id="KW-1133">Transmembrane helix</keyword>
<keyword id="KW-0813">Transport</keyword>
<name>Y1326_YERPE</name>
<gene>
    <name type="ordered locus">YPO1326</name>
    <name type="ordered locus">y2857</name>
    <name type="ordered locus">YP_1266</name>
</gene>
<reference key="1">
    <citation type="journal article" date="2001" name="Nature">
        <title>Genome sequence of Yersinia pestis, the causative agent of plague.</title>
        <authorList>
            <person name="Parkhill J."/>
            <person name="Wren B.W."/>
            <person name="Thomson N.R."/>
            <person name="Titball R.W."/>
            <person name="Holden M.T.G."/>
            <person name="Prentice M.B."/>
            <person name="Sebaihia M."/>
            <person name="James K.D."/>
            <person name="Churcher C.M."/>
            <person name="Mungall K.L."/>
            <person name="Baker S."/>
            <person name="Basham D."/>
            <person name="Bentley S.D."/>
            <person name="Brooks K."/>
            <person name="Cerdeno-Tarraga A.-M."/>
            <person name="Chillingworth T."/>
            <person name="Cronin A."/>
            <person name="Davies R.M."/>
            <person name="Davis P."/>
            <person name="Dougan G."/>
            <person name="Feltwell T."/>
            <person name="Hamlin N."/>
            <person name="Holroyd S."/>
            <person name="Jagels K."/>
            <person name="Karlyshev A.V."/>
            <person name="Leather S."/>
            <person name="Moule S."/>
            <person name="Oyston P.C.F."/>
            <person name="Quail M.A."/>
            <person name="Rutherford K.M."/>
            <person name="Simmonds M."/>
            <person name="Skelton J."/>
            <person name="Stevens K."/>
            <person name="Whitehead S."/>
            <person name="Barrell B.G."/>
        </authorList>
    </citation>
    <scope>NUCLEOTIDE SEQUENCE [LARGE SCALE GENOMIC DNA]</scope>
    <source>
        <strain>CO-92 / Biovar Orientalis</strain>
    </source>
</reference>
<reference key="2">
    <citation type="journal article" date="2002" name="J. Bacteriol.">
        <title>Genome sequence of Yersinia pestis KIM.</title>
        <authorList>
            <person name="Deng W."/>
            <person name="Burland V."/>
            <person name="Plunkett G. III"/>
            <person name="Boutin A."/>
            <person name="Mayhew G.F."/>
            <person name="Liss P."/>
            <person name="Perna N.T."/>
            <person name="Rose D.J."/>
            <person name="Mau B."/>
            <person name="Zhou S."/>
            <person name="Schwartz D.C."/>
            <person name="Fetherston J.D."/>
            <person name="Lindler L.E."/>
            <person name="Brubaker R.R."/>
            <person name="Plano G.V."/>
            <person name="Straley S.C."/>
            <person name="McDonough K.A."/>
            <person name="Nilles M.L."/>
            <person name="Matson J.S."/>
            <person name="Blattner F.R."/>
            <person name="Perry R.D."/>
        </authorList>
    </citation>
    <scope>NUCLEOTIDE SEQUENCE [LARGE SCALE GENOMIC DNA]</scope>
    <source>
        <strain>KIM10+ / Biovar Mediaevalis</strain>
    </source>
</reference>
<reference key="3">
    <citation type="journal article" date="2004" name="DNA Res.">
        <title>Complete genome sequence of Yersinia pestis strain 91001, an isolate avirulent to humans.</title>
        <authorList>
            <person name="Song Y."/>
            <person name="Tong Z."/>
            <person name="Wang J."/>
            <person name="Wang L."/>
            <person name="Guo Z."/>
            <person name="Han Y."/>
            <person name="Zhang J."/>
            <person name="Pei D."/>
            <person name="Zhou D."/>
            <person name="Qin H."/>
            <person name="Pang X."/>
            <person name="Han Y."/>
            <person name="Zhai J."/>
            <person name="Li M."/>
            <person name="Cui B."/>
            <person name="Qi Z."/>
            <person name="Jin L."/>
            <person name="Dai R."/>
            <person name="Chen F."/>
            <person name="Li S."/>
            <person name="Ye C."/>
            <person name="Du Z."/>
            <person name="Lin W."/>
            <person name="Wang J."/>
            <person name="Yu J."/>
            <person name="Yang H."/>
            <person name="Wang J."/>
            <person name="Huang P."/>
            <person name="Yang R."/>
        </authorList>
    </citation>
    <scope>NUCLEOTIDE SEQUENCE [LARGE SCALE GENOMIC DNA]</scope>
    <source>
        <strain>91001 / Biovar Mediaevalis</strain>
    </source>
</reference>
<protein>
    <recommendedName>
        <fullName evidence="1">Putative transport protein YPO1326/y2857/YP_1266</fullName>
    </recommendedName>
</protein>